<feature type="chain" id="PRO_0000098830" description="Tryptophan synthase alpha chain">
    <location>
        <begin position="1"/>
        <end position="265"/>
    </location>
</feature>
<feature type="active site" description="Proton acceptor" evidence="1">
    <location>
        <position position="49"/>
    </location>
</feature>
<feature type="active site" description="Proton acceptor" evidence="1">
    <location>
        <position position="60"/>
    </location>
</feature>
<reference key="1">
    <citation type="journal article" date="2002" name="Nature">
        <title>Genome sequence of the plant pathogen Ralstonia solanacearum.</title>
        <authorList>
            <person name="Salanoubat M."/>
            <person name="Genin S."/>
            <person name="Artiguenave F."/>
            <person name="Gouzy J."/>
            <person name="Mangenot S."/>
            <person name="Arlat M."/>
            <person name="Billault A."/>
            <person name="Brottier P."/>
            <person name="Camus J.-C."/>
            <person name="Cattolico L."/>
            <person name="Chandler M."/>
            <person name="Choisne N."/>
            <person name="Claudel-Renard C."/>
            <person name="Cunnac S."/>
            <person name="Demange N."/>
            <person name="Gaspin C."/>
            <person name="Lavie M."/>
            <person name="Moisan A."/>
            <person name="Robert C."/>
            <person name="Saurin W."/>
            <person name="Schiex T."/>
            <person name="Siguier P."/>
            <person name="Thebault P."/>
            <person name="Whalen M."/>
            <person name="Wincker P."/>
            <person name="Levy M."/>
            <person name="Weissenbach J."/>
            <person name="Boucher C.A."/>
        </authorList>
    </citation>
    <scope>NUCLEOTIDE SEQUENCE [LARGE SCALE GENOMIC DNA]</scope>
    <source>
        <strain>ATCC BAA-1114 / GMI1000</strain>
    </source>
</reference>
<accession>Q8XXY2</accession>
<keyword id="KW-0028">Amino-acid biosynthesis</keyword>
<keyword id="KW-0057">Aromatic amino acid biosynthesis</keyword>
<keyword id="KW-0456">Lyase</keyword>
<keyword id="KW-1185">Reference proteome</keyword>
<keyword id="KW-0822">Tryptophan biosynthesis</keyword>
<gene>
    <name evidence="1" type="primary">trpA</name>
    <name type="ordered locus">RSc1981</name>
    <name type="ORF">RS03555</name>
</gene>
<comment type="function">
    <text evidence="1">The alpha subunit is responsible for the aldol cleavage of indoleglycerol phosphate to indole and glyceraldehyde 3-phosphate.</text>
</comment>
<comment type="catalytic activity">
    <reaction evidence="1">
        <text>(1S,2R)-1-C-(indol-3-yl)glycerol 3-phosphate + L-serine = D-glyceraldehyde 3-phosphate + L-tryptophan + H2O</text>
        <dbReference type="Rhea" id="RHEA:10532"/>
        <dbReference type="ChEBI" id="CHEBI:15377"/>
        <dbReference type="ChEBI" id="CHEBI:33384"/>
        <dbReference type="ChEBI" id="CHEBI:57912"/>
        <dbReference type="ChEBI" id="CHEBI:58866"/>
        <dbReference type="ChEBI" id="CHEBI:59776"/>
        <dbReference type="EC" id="4.2.1.20"/>
    </reaction>
</comment>
<comment type="pathway">
    <text evidence="1">Amino-acid biosynthesis; L-tryptophan biosynthesis; L-tryptophan from chorismate: step 5/5.</text>
</comment>
<comment type="subunit">
    <text evidence="1">Tetramer of two alpha and two beta chains.</text>
</comment>
<comment type="similarity">
    <text evidence="1">Belongs to the TrpA family.</text>
</comment>
<organism>
    <name type="scientific">Ralstonia nicotianae (strain ATCC BAA-1114 / GMI1000)</name>
    <name type="common">Ralstonia solanacearum</name>
    <dbReference type="NCBI Taxonomy" id="267608"/>
    <lineage>
        <taxon>Bacteria</taxon>
        <taxon>Pseudomonadati</taxon>
        <taxon>Pseudomonadota</taxon>
        <taxon>Betaproteobacteria</taxon>
        <taxon>Burkholderiales</taxon>
        <taxon>Burkholderiaceae</taxon>
        <taxon>Ralstonia</taxon>
        <taxon>Ralstonia solanacearum species complex</taxon>
    </lineage>
</organism>
<sequence>MSRIAQTFSQLSAQGRKGLIPFITAGDPYPELTVDLMHALVKGGANVIELGVPFSDPMADGPVIQRASERALAKKIGLRTVLDYVRAFRATDKTTPVVLMGYANPIERMGIDAFAKAASEAGVDGVLVVDYPPEECEAFAKTMRAAGIDPIFLLAPTSTEARMAQIARVASGYIYYVSLKGVTGAATLDLDSVAARIPQIRQHARLPVGVGFGIRDAATARAIGGVADAVVIGSRIVQLLEEASREQAVQCLTDFIADIRQALDA</sequence>
<dbReference type="EC" id="4.2.1.20" evidence="1"/>
<dbReference type="EMBL" id="AL646052">
    <property type="protein sequence ID" value="CAD15683.1"/>
    <property type="molecule type" value="Genomic_DNA"/>
</dbReference>
<dbReference type="RefSeq" id="WP_011001917.1">
    <property type="nucleotide sequence ID" value="NC_003295.1"/>
</dbReference>
<dbReference type="SMR" id="Q8XXY2"/>
<dbReference type="STRING" id="267608.RSc1981"/>
<dbReference type="EnsemblBacteria" id="CAD15683">
    <property type="protein sequence ID" value="CAD15683"/>
    <property type="gene ID" value="RSc1981"/>
</dbReference>
<dbReference type="KEGG" id="rso:RSc1981"/>
<dbReference type="eggNOG" id="COG0159">
    <property type="taxonomic scope" value="Bacteria"/>
</dbReference>
<dbReference type="HOGENOM" id="CLU_016734_0_0_4"/>
<dbReference type="UniPathway" id="UPA00035">
    <property type="reaction ID" value="UER00044"/>
</dbReference>
<dbReference type="Proteomes" id="UP000001436">
    <property type="component" value="Chromosome"/>
</dbReference>
<dbReference type="GO" id="GO:0005829">
    <property type="term" value="C:cytosol"/>
    <property type="evidence" value="ECO:0007669"/>
    <property type="project" value="TreeGrafter"/>
</dbReference>
<dbReference type="GO" id="GO:0004834">
    <property type="term" value="F:tryptophan synthase activity"/>
    <property type="evidence" value="ECO:0007669"/>
    <property type="project" value="UniProtKB-UniRule"/>
</dbReference>
<dbReference type="CDD" id="cd04724">
    <property type="entry name" value="Tryptophan_synthase_alpha"/>
    <property type="match status" value="1"/>
</dbReference>
<dbReference type="FunFam" id="3.20.20.70:FF:000037">
    <property type="entry name" value="Tryptophan synthase alpha chain"/>
    <property type="match status" value="1"/>
</dbReference>
<dbReference type="Gene3D" id="3.20.20.70">
    <property type="entry name" value="Aldolase class I"/>
    <property type="match status" value="1"/>
</dbReference>
<dbReference type="HAMAP" id="MF_00131">
    <property type="entry name" value="Trp_synth_alpha"/>
    <property type="match status" value="1"/>
</dbReference>
<dbReference type="InterPro" id="IPR013785">
    <property type="entry name" value="Aldolase_TIM"/>
</dbReference>
<dbReference type="InterPro" id="IPR011060">
    <property type="entry name" value="RibuloseP-bd_barrel"/>
</dbReference>
<dbReference type="InterPro" id="IPR018204">
    <property type="entry name" value="Trp_synthase_alpha_AS"/>
</dbReference>
<dbReference type="InterPro" id="IPR002028">
    <property type="entry name" value="Trp_synthase_suA"/>
</dbReference>
<dbReference type="NCBIfam" id="TIGR00262">
    <property type="entry name" value="trpA"/>
    <property type="match status" value="1"/>
</dbReference>
<dbReference type="PANTHER" id="PTHR43406:SF1">
    <property type="entry name" value="TRYPTOPHAN SYNTHASE ALPHA CHAIN, CHLOROPLASTIC"/>
    <property type="match status" value="1"/>
</dbReference>
<dbReference type="PANTHER" id="PTHR43406">
    <property type="entry name" value="TRYPTOPHAN SYNTHASE, ALPHA CHAIN"/>
    <property type="match status" value="1"/>
</dbReference>
<dbReference type="Pfam" id="PF00290">
    <property type="entry name" value="Trp_syntA"/>
    <property type="match status" value="1"/>
</dbReference>
<dbReference type="SUPFAM" id="SSF51366">
    <property type="entry name" value="Ribulose-phoshate binding barrel"/>
    <property type="match status" value="1"/>
</dbReference>
<dbReference type="PROSITE" id="PS00167">
    <property type="entry name" value="TRP_SYNTHASE_ALPHA"/>
    <property type="match status" value="1"/>
</dbReference>
<name>TRPA_RALN1</name>
<protein>
    <recommendedName>
        <fullName evidence="1">Tryptophan synthase alpha chain</fullName>
        <ecNumber evidence="1">4.2.1.20</ecNumber>
    </recommendedName>
</protein>
<proteinExistence type="inferred from homology"/>
<evidence type="ECO:0000255" key="1">
    <source>
        <dbReference type="HAMAP-Rule" id="MF_00131"/>
    </source>
</evidence>